<protein>
    <recommendedName>
        <fullName evidence="1">Digeranylgeranylglycerophospholipid reductase 1</fullName>
        <shortName evidence="1">DGGGPL reductase 1</shortName>
        <ecNumber evidence="1">1.3.-.-</ecNumber>
    </recommendedName>
    <alternativeName>
        <fullName evidence="1">2,3-bis-O-geranylgeranylglyceryl phosphate reductase 1</fullName>
    </alternativeName>
    <alternativeName>
        <fullName evidence="1">Geranylgeranyl reductase 1</fullName>
        <shortName evidence="1">GGR 1</shortName>
    </alternativeName>
</protein>
<feature type="chain" id="PRO_0000351458" description="Digeranylgeranylglycerophospholipid reductase 1">
    <location>
        <begin position="1"/>
        <end position="375"/>
    </location>
</feature>
<feature type="binding site" evidence="1">
    <location>
        <position position="13"/>
    </location>
    <ligand>
        <name>FAD</name>
        <dbReference type="ChEBI" id="CHEBI:57692"/>
    </ligand>
</feature>
<feature type="binding site" evidence="1">
    <location>
        <position position="32"/>
    </location>
    <ligand>
        <name>FAD</name>
        <dbReference type="ChEBI" id="CHEBI:57692"/>
    </ligand>
</feature>
<feature type="binding site" evidence="1">
    <location>
        <position position="43"/>
    </location>
    <ligand>
        <name>FAD</name>
        <dbReference type="ChEBI" id="CHEBI:57692"/>
    </ligand>
</feature>
<feature type="binding site" evidence="1">
    <location>
        <position position="44"/>
    </location>
    <ligand>
        <name>FAD</name>
        <dbReference type="ChEBI" id="CHEBI:57692"/>
    </ligand>
</feature>
<feature type="binding site" evidence="1">
    <location>
        <position position="46"/>
    </location>
    <ligand>
        <name>FAD</name>
        <dbReference type="ChEBI" id="CHEBI:57692"/>
    </ligand>
</feature>
<feature type="binding site" evidence="1">
    <location>
        <position position="92"/>
    </location>
    <ligand>
        <name>FAD</name>
        <dbReference type="ChEBI" id="CHEBI:57692"/>
    </ligand>
</feature>
<feature type="binding site" evidence="1">
    <location>
        <position position="116"/>
    </location>
    <ligand>
        <name>FAD</name>
        <dbReference type="ChEBI" id="CHEBI:57692"/>
    </ligand>
</feature>
<feature type="binding site" evidence="1">
    <location>
        <position position="275"/>
    </location>
    <ligand>
        <name>FAD</name>
        <dbReference type="ChEBI" id="CHEBI:57692"/>
    </ligand>
</feature>
<feature type="binding site" evidence="1">
    <location>
        <position position="287"/>
    </location>
    <ligand>
        <name>FAD</name>
        <dbReference type="ChEBI" id="CHEBI:57692"/>
    </ligand>
</feature>
<feature type="binding site" evidence="1">
    <location>
        <position position="288"/>
    </location>
    <ligand>
        <name>FAD</name>
        <dbReference type="ChEBI" id="CHEBI:57692"/>
    </ligand>
</feature>
<feature type="binding site" evidence="1">
    <location>
        <position position="367"/>
    </location>
    <ligand>
        <name>a 2,3-bis-O-(geranylgeranyl)-sn-glycerol 1-phospholipid</name>
        <dbReference type="ChEBI" id="CHEBI:138140"/>
    </ligand>
</feature>
<proteinExistence type="inferred from homology"/>
<accession>Q8TVE9</accession>
<evidence type="ECO:0000255" key="1">
    <source>
        <dbReference type="HAMAP-Rule" id="MF_01287"/>
    </source>
</evidence>
<reference key="1">
    <citation type="journal article" date="2002" name="Proc. Natl. Acad. Sci. U.S.A.">
        <title>The complete genome of hyperthermophile Methanopyrus kandleri AV19 and monophyly of archaeal methanogens.</title>
        <authorList>
            <person name="Slesarev A.I."/>
            <person name="Mezhevaya K.V."/>
            <person name="Makarova K.S."/>
            <person name="Polushin N.N."/>
            <person name="Shcherbinina O.V."/>
            <person name="Shakhova V.V."/>
            <person name="Belova G.I."/>
            <person name="Aravind L."/>
            <person name="Natale D.A."/>
            <person name="Rogozin I.B."/>
            <person name="Tatusov R.L."/>
            <person name="Wolf Y.I."/>
            <person name="Stetter K.O."/>
            <person name="Malykh A.G."/>
            <person name="Koonin E.V."/>
            <person name="Kozyavkin S.A."/>
        </authorList>
    </citation>
    <scope>NUCLEOTIDE SEQUENCE [LARGE SCALE GENOMIC DNA]</scope>
    <source>
        <strain>AV19 / DSM 6324 / JCM 9639 / NBRC 100938</strain>
    </source>
</reference>
<keyword id="KW-0274">FAD</keyword>
<keyword id="KW-0285">Flavoprotein</keyword>
<keyword id="KW-0444">Lipid biosynthesis</keyword>
<keyword id="KW-0443">Lipid metabolism</keyword>
<keyword id="KW-0560">Oxidoreductase</keyword>
<keyword id="KW-0594">Phospholipid biosynthesis</keyword>
<keyword id="KW-1208">Phospholipid metabolism</keyword>
<keyword id="KW-1185">Reference proteome</keyword>
<comment type="function">
    <text evidence="1">Is involved in the reduction of 2,3-digeranylgeranylglycerophospholipids (unsaturated archaeols) into 2,3-diphytanylglycerophospholipids (saturated archaeols) in the biosynthesis of archaeal membrane lipids. Catalyzes the formation of archaetidic acid (2,3-di-O-phytanyl-sn-glyceryl phosphate) from 2,3-di-O-geranylgeranylglyceryl phosphate (DGGGP) via the hydrogenation of each double bond of the isoprenoid chains. Is also probably able to reduce double bonds of geranyl groups in CDP-2,3-bis-O-(geranylgeranyl)-sn-glycerol and archaetidylserine, thus acting at various stages in the biosynthesis of archaeal membrane lipids.</text>
</comment>
<comment type="catalytic activity">
    <reaction evidence="1">
        <text>a 2,3-bis-O-phytanyl-sn-glycerol 1-phospholipid + 8 A = a 2,3-bis-O-(geranylgeranyl)-sn-glycerol 1-phospholipid + 8 AH2</text>
        <dbReference type="Rhea" id="RHEA:64376"/>
        <dbReference type="ChEBI" id="CHEBI:13193"/>
        <dbReference type="ChEBI" id="CHEBI:17499"/>
        <dbReference type="ChEBI" id="CHEBI:138139"/>
        <dbReference type="ChEBI" id="CHEBI:138140"/>
    </reaction>
    <physiologicalReaction direction="right-to-left" evidence="1">
        <dbReference type="Rhea" id="RHEA:64378"/>
    </physiologicalReaction>
</comment>
<comment type="catalytic activity">
    <reaction evidence="1">
        <text>2,3-bis-O-(phytanyl)-sn-glycerol 1-phosphate + 8 A = 2,3-bis-O-(geranylgeranyl)-sn-glycerol 1-phosphate + 8 AH2</text>
        <dbReference type="Rhea" id="RHEA:64368"/>
        <dbReference type="ChEBI" id="CHEBI:13193"/>
        <dbReference type="ChEBI" id="CHEBI:17499"/>
        <dbReference type="ChEBI" id="CHEBI:58837"/>
        <dbReference type="ChEBI" id="CHEBI:73125"/>
    </reaction>
    <physiologicalReaction direction="right-to-left" evidence="1">
        <dbReference type="Rhea" id="RHEA:64370"/>
    </physiologicalReaction>
</comment>
<comment type="catalytic activity">
    <reaction evidence="1">
        <text>CDP-2,3-bis-O-(geranylgeranyl)-sn-glycerol + 8 AH2 = CDP-2,3-bis-O-(phytanyl)-sn-glycerol + 8 A</text>
        <dbReference type="Rhea" id="RHEA:84207"/>
        <dbReference type="ChEBI" id="CHEBI:13193"/>
        <dbReference type="ChEBI" id="CHEBI:17499"/>
        <dbReference type="ChEBI" id="CHEBI:58838"/>
        <dbReference type="ChEBI" id="CHEBI:74004"/>
    </reaction>
    <physiologicalReaction direction="left-to-right" evidence="1">
        <dbReference type="Rhea" id="RHEA:84208"/>
    </physiologicalReaction>
</comment>
<comment type="catalytic activity">
    <reaction evidence="1">
        <text>archaetidylserine + 8 AH2 = 2,3-bis-O-phytanyl-sn-glycero-3-phospho-L-serine + 8 A</text>
        <dbReference type="Rhea" id="RHEA:84215"/>
        <dbReference type="ChEBI" id="CHEBI:13193"/>
        <dbReference type="ChEBI" id="CHEBI:17499"/>
        <dbReference type="ChEBI" id="CHEBI:71517"/>
        <dbReference type="ChEBI" id="CHEBI:74853"/>
    </reaction>
    <physiologicalReaction direction="left-to-right" evidence="1">
        <dbReference type="Rhea" id="RHEA:84216"/>
    </physiologicalReaction>
</comment>
<comment type="cofactor">
    <cofactor evidence="1">
        <name>FAD</name>
        <dbReference type="ChEBI" id="CHEBI:57692"/>
    </cofactor>
    <text evidence="1">Binds 1 FAD per subunit.</text>
</comment>
<comment type="pathway">
    <text evidence="1">Membrane lipid metabolism; glycerophospholipid metabolism.</text>
</comment>
<comment type="miscellaneous">
    <text evidence="1">Reduction reaction proceeds via syn addition of hydrogen for double bonds.</text>
</comment>
<comment type="similarity">
    <text evidence="1">Belongs to the geranylgeranyl reductase family. DGGGPL reductase subfamily.</text>
</comment>
<organism>
    <name type="scientific">Methanopyrus kandleri (strain AV19 / DSM 6324 / JCM 9639 / NBRC 100938)</name>
    <dbReference type="NCBI Taxonomy" id="190192"/>
    <lineage>
        <taxon>Archaea</taxon>
        <taxon>Methanobacteriati</taxon>
        <taxon>Methanobacteriota</taxon>
        <taxon>Methanomada group</taxon>
        <taxon>Methanopyri</taxon>
        <taxon>Methanopyrales</taxon>
        <taxon>Methanopyraceae</taxon>
        <taxon>Methanopyrus</taxon>
    </lineage>
</organism>
<dbReference type="EC" id="1.3.-.-" evidence="1"/>
<dbReference type="EMBL" id="AE009439">
    <property type="protein sequence ID" value="AAM02656.1"/>
    <property type="molecule type" value="Genomic_DNA"/>
</dbReference>
<dbReference type="RefSeq" id="WP_011019811.1">
    <property type="nucleotide sequence ID" value="NC_003551.1"/>
</dbReference>
<dbReference type="SMR" id="Q8TVE9"/>
<dbReference type="FunCoup" id="Q8TVE9">
    <property type="interactions" value="53"/>
</dbReference>
<dbReference type="STRING" id="190192.MK1443"/>
<dbReference type="PaxDb" id="190192-MK1443"/>
<dbReference type="EnsemblBacteria" id="AAM02656">
    <property type="protein sequence ID" value="AAM02656"/>
    <property type="gene ID" value="MK1443"/>
</dbReference>
<dbReference type="GeneID" id="1478038"/>
<dbReference type="KEGG" id="mka:MK1443"/>
<dbReference type="PATRIC" id="fig|190192.8.peg.1599"/>
<dbReference type="HOGENOM" id="CLU_024648_0_0_2"/>
<dbReference type="InParanoid" id="Q8TVE9"/>
<dbReference type="OrthoDB" id="6062at2157"/>
<dbReference type="UniPathway" id="UPA00940"/>
<dbReference type="Proteomes" id="UP000001826">
    <property type="component" value="Chromosome"/>
</dbReference>
<dbReference type="GO" id="GO:0016020">
    <property type="term" value="C:membrane"/>
    <property type="evidence" value="ECO:0007669"/>
    <property type="project" value="GOC"/>
</dbReference>
<dbReference type="GO" id="GO:0071949">
    <property type="term" value="F:FAD binding"/>
    <property type="evidence" value="ECO:0007669"/>
    <property type="project" value="InterPro"/>
</dbReference>
<dbReference type="GO" id="GO:0045550">
    <property type="term" value="F:geranylgeranyl reductase activity"/>
    <property type="evidence" value="ECO:0007669"/>
    <property type="project" value="InterPro"/>
</dbReference>
<dbReference type="GO" id="GO:0016628">
    <property type="term" value="F:oxidoreductase activity, acting on the CH-CH group of donors, NAD or NADP as acceptor"/>
    <property type="evidence" value="ECO:0007669"/>
    <property type="project" value="InterPro"/>
</dbReference>
<dbReference type="GO" id="GO:0046474">
    <property type="term" value="P:glycerophospholipid biosynthetic process"/>
    <property type="evidence" value="ECO:0007669"/>
    <property type="project" value="UniProtKB-UniRule"/>
</dbReference>
<dbReference type="GO" id="GO:0046467">
    <property type="term" value="P:membrane lipid biosynthetic process"/>
    <property type="evidence" value="ECO:0007669"/>
    <property type="project" value="InterPro"/>
</dbReference>
<dbReference type="Gene3D" id="3.30.9.10">
    <property type="entry name" value="D-Amino Acid Oxidase, subunit A, domain 2"/>
    <property type="match status" value="1"/>
</dbReference>
<dbReference type="Gene3D" id="3.50.50.60">
    <property type="entry name" value="FAD/NAD(P)-binding domain"/>
    <property type="match status" value="1"/>
</dbReference>
<dbReference type="HAMAP" id="MF_01287">
    <property type="entry name" value="DGGGPL_reductase"/>
    <property type="match status" value="1"/>
</dbReference>
<dbReference type="InterPro" id="IPR023590">
    <property type="entry name" value="DGGGPL_reductase"/>
</dbReference>
<dbReference type="InterPro" id="IPR002938">
    <property type="entry name" value="FAD-bd"/>
</dbReference>
<dbReference type="InterPro" id="IPR036188">
    <property type="entry name" value="FAD/NAD-bd_sf"/>
</dbReference>
<dbReference type="InterPro" id="IPR011777">
    <property type="entry name" value="Geranylgeranyl_Rdtase_fam"/>
</dbReference>
<dbReference type="InterPro" id="IPR050407">
    <property type="entry name" value="Geranylgeranyl_reductase"/>
</dbReference>
<dbReference type="NCBIfam" id="TIGR02032">
    <property type="entry name" value="GG-red-SF"/>
    <property type="match status" value="1"/>
</dbReference>
<dbReference type="PANTHER" id="PTHR42685:SF18">
    <property type="entry name" value="DIGERANYLGERANYLGLYCEROPHOSPHOLIPID REDUCTASE"/>
    <property type="match status" value="1"/>
</dbReference>
<dbReference type="PANTHER" id="PTHR42685">
    <property type="entry name" value="GERANYLGERANYL DIPHOSPHATE REDUCTASE"/>
    <property type="match status" value="1"/>
</dbReference>
<dbReference type="Pfam" id="PF01494">
    <property type="entry name" value="FAD_binding_3"/>
    <property type="match status" value="1"/>
</dbReference>
<dbReference type="PRINTS" id="PR00420">
    <property type="entry name" value="RNGMNOXGNASE"/>
</dbReference>
<dbReference type="SUPFAM" id="SSF51905">
    <property type="entry name" value="FAD/NAD(P)-binding domain"/>
    <property type="match status" value="1"/>
</dbReference>
<name>GGR1_METKA</name>
<gene>
    <name type="ordered locus">MK1443</name>
</gene>
<sequence length="375" mass="40496">MEFDVVVVGAGPAGSVAAWAAAEAGCDVLILERKAEIGVPKQCAEGISARALEEVGIRPDDGWIAAEIERGILSLPSGSKFEVEVEGYVLERRVFDKWLVVRAVEAGAEVELLAHARRALLDEGRVVGVEYEGEDGVHEVRARIVIAADGIESRIGRTAGLVPQLEPDHICTCAQYEVVGDRYDPKAFMIHFDPERIPGGYAWVFPKGENRANVGVGIRGSESSPGLALKTLDELVEGPLSELVAGTPVEVNVGGVPVCGPVERTYGDGILLVGDAARQVNPLTGGGLNTALICGRIAGEVAVEAIEEDDTSASFLKRYQDRWEEEFRDTFECAREVAEMLPELDLKEVVEFLSSVENLEEMLRTSGILEDVWWG</sequence>